<accession>Q0SNB7</accession>
<accession>G0IS37</accession>
<name>RL7_BORAP</name>
<feature type="chain" id="PRO_1000006964" description="Large ribosomal subunit protein bL12">
    <location>
        <begin position="1"/>
        <end position="124"/>
    </location>
</feature>
<gene>
    <name evidence="1" type="primary">rplL</name>
    <name type="ordered locus">BAPKO_0405</name>
    <name type="ordered locus">BafPKo_0392</name>
</gene>
<proteinExistence type="inferred from homology"/>
<evidence type="ECO:0000255" key="1">
    <source>
        <dbReference type="HAMAP-Rule" id="MF_00368"/>
    </source>
</evidence>
<evidence type="ECO:0000305" key="2"/>
<comment type="function">
    <text evidence="1">Forms part of the ribosomal stalk which helps the ribosome interact with GTP-bound translation factors. Is thus essential for accurate translation.</text>
</comment>
<comment type="subunit">
    <text evidence="1">Homodimer. Part of the ribosomal stalk of the 50S ribosomal subunit. Forms a multimeric L10(L12)X complex, where L10 forms an elongated spine to which 2 to 4 L12 dimers bind in a sequential fashion. Binds GTP-bound translation factors.</text>
</comment>
<comment type="similarity">
    <text evidence="1">Belongs to the bacterial ribosomal protein bL12 family.</text>
</comment>
<sequence>MALNKEDILTWLEGAKTMEVVELVTAIEEKFGVTAAVATSVGGAASTGSTDSEEQTEFDVILMSFGDSKINVIKEVRSITGLGLGEAKALVESAPKAIKEGLSKSDAEELKKKLEAVGAKVEVK</sequence>
<protein>
    <recommendedName>
        <fullName evidence="1">Large ribosomal subunit protein bL12</fullName>
    </recommendedName>
    <alternativeName>
        <fullName evidence="2">50S ribosomal protein L7/L12</fullName>
    </alternativeName>
</protein>
<dbReference type="EMBL" id="CP000395">
    <property type="protein sequence ID" value="ABH01661.1"/>
    <property type="molecule type" value="Genomic_DNA"/>
</dbReference>
<dbReference type="EMBL" id="CP002933">
    <property type="protein sequence ID" value="AEL69618.1"/>
    <property type="molecule type" value="Genomic_DNA"/>
</dbReference>
<dbReference type="RefSeq" id="WP_004790358.1">
    <property type="nucleotide sequence ID" value="NZ_CP160066.1"/>
</dbReference>
<dbReference type="SMR" id="Q0SNB7"/>
<dbReference type="STRING" id="29518.BLA32_02355"/>
<dbReference type="GeneID" id="77265228"/>
<dbReference type="KEGG" id="baf:BAPKO_0405"/>
<dbReference type="KEGG" id="bafz:BafPKo_0392"/>
<dbReference type="PATRIC" id="fig|390236.22.peg.385"/>
<dbReference type="eggNOG" id="COG0222">
    <property type="taxonomic scope" value="Bacteria"/>
</dbReference>
<dbReference type="HOGENOM" id="CLU_086499_3_2_12"/>
<dbReference type="OrthoDB" id="9811748at2"/>
<dbReference type="Proteomes" id="UP000005216">
    <property type="component" value="Chromosome"/>
</dbReference>
<dbReference type="GO" id="GO:0022625">
    <property type="term" value="C:cytosolic large ribosomal subunit"/>
    <property type="evidence" value="ECO:0007669"/>
    <property type="project" value="TreeGrafter"/>
</dbReference>
<dbReference type="GO" id="GO:0003729">
    <property type="term" value="F:mRNA binding"/>
    <property type="evidence" value="ECO:0007669"/>
    <property type="project" value="TreeGrafter"/>
</dbReference>
<dbReference type="GO" id="GO:0003735">
    <property type="term" value="F:structural constituent of ribosome"/>
    <property type="evidence" value="ECO:0007669"/>
    <property type="project" value="InterPro"/>
</dbReference>
<dbReference type="GO" id="GO:0006412">
    <property type="term" value="P:translation"/>
    <property type="evidence" value="ECO:0007669"/>
    <property type="project" value="UniProtKB-UniRule"/>
</dbReference>
<dbReference type="CDD" id="cd00387">
    <property type="entry name" value="Ribosomal_L7_L12"/>
    <property type="match status" value="1"/>
</dbReference>
<dbReference type="FunFam" id="3.30.1390.10:FF:000001">
    <property type="entry name" value="50S ribosomal protein L7/L12"/>
    <property type="match status" value="1"/>
</dbReference>
<dbReference type="Gene3D" id="3.30.1390.10">
    <property type="match status" value="1"/>
</dbReference>
<dbReference type="Gene3D" id="1.20.5.710">
    <property type="entry name" value="Single helix bin"/>
    <property type="match status" value="1"/>
</dbReference>
<dbReference type="HAMAP" id="MF_00368">
    <property type="entry name" value="Ribosomal_bL12"/>
    <property type="match status" value="1"/>
</dbReference>
<dbReference type="InterPro" id="IPR000206">
    <property type="entry name" value="Ribosomal_bL12"/>
</dbReference>
<dbReference type="InterPro" id="IPR013823">
    <property type="entry name" value="Ribosomal_bL12_C"/>
</dbReference>
<dbReference type="InterPro" id="IPR014719">
    <property type="entry name" value="Ribosomal_bL12_C/ClpS-like"/>
</dbReference>
<dbReference type="InterPro" id="IPR008932">
    <property type="entry name" value="Ribosomal_bL12_oligo"/>
</dbReference>
<dbReference type="InterPro" id="IPR036235">
    <property type="entry name" value="Ribosomal_bL12_oligo_N_sf"/>
</dbReference>
<dbReference type="NCBIfam" id="TIGR00855">
    <property type="entry name" value="L12"/>
    <property type="match status" value="1"/>
</dbReference>
<dbReference type="PANTHER" id="PTHR45987">
    <property type="entry name" value="39S RIBOSOMAL PROTEIN L12"/>
    <property type="match status" value="1"/>
</dbReference>
<dbReference type="PANTHER" id="PTHR45987:SF4">
    <property type="entry name" value="LARGE RIBOSOMAL SUBUNIT PROTEIN BL12M"/>
    <property type="match status" value="1"/>
</dbReference>
<dbReference type="Pfam" id="PF00542">
    <property type="entry name" value="Ribosomal_L12"/>
    <property type="match status" value="1"/>
</dbReference>
<dbReference type="Pfam" id="PF16320">
    <property type="entry name" value="Ribosomal_L12_N"/>
    <property type="match status" value="1"/>
</dbReference>
<dbReference type="SUPFAM" id="SSF54736">
    <property type="entry name" value="ClpS-like"/>
    <property type="match status" value="1"/>
</dbReference>
<dbReference type="SUPFAM" id="SSF48300">
    <property type="entry name" value="Ribosomal protein L7/12, oligomerisation (N-terminal) domain"/>
    <property type="match status" value="1"/>
</dbReference>
<keyword id="KW-0687">Ribonucleoprotein</keyword>
<keyword id="KW-0689">Ribosomal protein</keyword>
<organism>
    <name type="scientific">Borreliella afzelii (strain PKo)</name>
    <name type="common">Borrelia afzelii</name>
    <dbReference type="NCBI Taxonomy" id="390236"/>
    <lineage>
        <taxon>Bacteria</taxon>
        <taxon>Pseudomonadati</taxon>
        <taxon>Spirochaetota</taxon>
        <taxon>Spirochaetia</taxon>
        <taxon>Spirochaetales</taxon>
        <taxon>Borreliaceae</taxon>
        <taxon>Borreliella</taxon>
    </lineage>
</organism>
<reference key="1">
    <citation type="journal article" date="2006" name="BMC Genomics">
        <title>Comparative genome analysis: selection pressure on the Borrelia vls cassettes is essential for infectivity.</title>
        <authorList>
            <person name="Gloeckner G."/>
            <person name="Schulte-Spechtel U."/>
            <person name="Schilhabel M."/>
            <person name="Felder M."/>
            <person name="Suehnel J."/>
            <person name="Wilske B."/>
            <person name="Platzer M."/>
        </authorList>
    </citation>
    <scope>NUCLEOTIDE SEQUENCE [LARGE SCALE GENOMIC DNA]</scope>
    <source>
        <strain>PKo</strain>
    </source>
</reference>
<reference key="2">
    <citation type="journal article" date="2011" name="J. Bacteriol.">
        <title>Whole-genome sequences of two Borrelia afzelii and two Borrelia garinii Lyme disease agent isolates.</title>
        <authorList>
            <person name="Casjens S.R."/>
            <person name="Mongodin E.F."/>
            <person name="Qiu W.G."/>
            <person name="Dunn J.J."/>
            <person name="Luft B.J."/>
            <person name="Fraser-Liggett C.M."/>
            <person name="Schutzer S.E."/>
        </authorList>
    </citation>
    <scope>NUCLEOTIDE SEQUENCE [LARGE SCALE GENOMIC DNA]</scope>
    <source>
        <strain>PKo</strain>
    </source>
</reference>